<proteinExistence type="inferred from homology"/>
<protein>
    <recommendedName>
        <fullName evidence="1">4-hydroxy-2-oxovalerate aldolase</fullName>
        <shortName evidence="1">HOA</shortName>
        <ecNumber evidence="1">4.1.3.39</ecNumber>
    </recommendedName>
    <alternativeName>
        <fullName evidence="1">4-hydroxy-2-keto-pentanoic acid aldolase</fullName>
    </alternativeName>
    <alternativeName>
        <fullName evidence="1">4-hydroxy-2-oxopentanoate aldolase</fullName>
    </alternativeName>
</protein>
<dbReference type="EC" id="4.1.3.39" evidence="1"/>
<dbReference type="EMBL" id="CP000800">
    <property type="protein sequence ID" value="ABV16944.1"/>
    <property type="molecule type" value="Genomic_DNA"/>
</dbReference>
<dbReference type="RefSeq" id="WP_001013499.1">
    <property type="nucleotide sequence ID" value="NC_009801.1"/>
</dbReference>
<dbReference type="SMR" id="A7ZI99"/>
<dbReference type="GeneID" id="75202515"/>
<dbReference type="KEGG" id="ecw:EcE24377A_0376"/>
<dbReference type="HOGENOM" id="CLU_049173_0_0_6"/>
<dbReference type="UniPathway" id="UPA00714"/>
<dbReference type="Proteomes" id="UP000001122">
    <property type="component" value="Chromosome"/>
</dbReference>
<dbReference type="GO" id="GO:0003852">
    <property type="term" value="F:2-isopropylmalate synthase activity"/>
    <property type="evidence" value="ECO:0007669"/>
    <property type="project" value="TreeGrafter"/>
</dbReference>
<dbReference type="GO" id="GO:0008701">
    <property type="term" value="F:4-hydroxy-2-oxovalerate aldolase activity"/>
    <property type="evidence" value="ECO:0007669"/>
    <property type="project" value="UniProtKB-UniRule"/>
</dbReference>
<dbReference type="GO" id="GO:0030145">
    <property type="term" value="F:manganese ion binding"/>
    <property type="evidence" value="ECO:0007669"/>
    <property type="project" value="UniProtKB-UniRule"/>
</dbReference>
<dbReference type="GO" id="GO:0019380">
    <property type="term" value="P:3-phenylpropionate catabolic process"/>
    <property type="evidence" value="ECO:0007669"/>
    <property type="project" value="UniProtKB-UniRule"/>
</dbReference>
<dbReference type="GO" id="GO:0009098">
    <property type="term" value="P:L-leucine biosynthetic process"/>
    <property type="evidence" value="ECO:0007669"/>
    <property type="project" value="TreeGrafter"/>
</dbReference>
<dbReference type="CDD" id="cd07943">
    <property type="entry name" value="DRE_TIM_HOA"/>
    <property type="match status" value="1"/>
</dbReference>
<dbReference type="FunFam" id="1.10.8.60:FF:000042">
    <property type="entry name" value="4-hydroxy-2-oxovalerate aldolase"/>
    <property type="match status" value="1"/>
</dbReference>
<dbReference type="FunFam" id="3.20.20.70:FF:000072">
    <property type="entry name" value="4-hydroxy-2-oxovalerate aldolase"/>
    <property type="match status" value="1"/>
</dbReference>
<dbReference type="Gene3D" id="1.10.8.60">
    <property type="match status" value="1"/>
</dbReference>
<dbReference type="Gene3D" id="3.20.20.70">
    <property type="entry name" value="Aldolase class I"/>
    <property type="match status" value="1"/>
</dbReference>
<dbReference type="HAMAP" id="MF_01656">
    <property type="entry name" value="HOA"/>
    <property type="match status" value="1"/>
</dbReference>
<dbReference type="InterPro" id="IPR050073">
    <property type="entry name" value="2-IPM_HCS-like"/>
</dbReference>
<dbReference type="InterPro" id="IPR017629">
    <property type="entry name" value="4OH_2_O-val_aldolase"/>
</dbReference>
<dbReference type="InterPro" id="IPR013785">
    <property type="entry name" value="Aldolase_TIM"/>
</dbReference>
<dbReference type="InterPro" id="IPR012425">
    <property type="entry name" value="DmpG_comm"/>
</dbReference>
<dbReference type="InterPro" id="IPR035685">
    <property type="entry name" value="DRE_TIM_HOA"/>
</dbReference>
<dbReference type="InterPro" id="IPR000891">
    <property type="entry name" value="PYR_CT"/>
</dbReference>
<dbReference type="NCBIfam" id="TIGR03217">
    <property type="entry name" value="4OH_2_O_val_ald"/>
    <property type="match status" value="1"/>
</dbReference>
<dbReference type="NCBIfam" id="NF006049">
    <property type="entry name" value="PRK08195.1"/>
    <property type="match status" value="1"/>
</dbReference>
<dbReference type="PANTHER" id="PTHR10277:SF9">
    <property type="entry name" value="2-ISOPROPYLMALATE SYNTHASE 1, CHLOROPLASTIC-RELATED"/>
    <property type="match status" value="1"/>
</dbReference>
<dbReference type="PANTHER" id="PTHR10277">
    <property type="entry name" value="HOMOCITRATE SYNTHASE-RELATED"/>
    <property type="match status" value="1"/>
</dbReference>
<dbReference type="Pfam" id="PF07836">
    <property type="entry name" value="DmpG_comm"/>
    <property type="match status" value="1"/>
</dbReference>
<dbReference type="Pfam" id="PF00682">
    <property type="entry name" value="HMGL-like"/>
    <property type="match status" value="1"/>
</dbReference>
<dbReference type="SUPFAM" id="SSF51569">
    <property type="entry name" value="Aldolase"/>
    <property type="match status" value="1"/>
</dbReference>
<dbReference type="SUPFAM" id="SSF89000">
    <property type="entry name" value="post-HMGL domain-like"/>
    <property type="match status" value="1"/>
</dbReference>
<dbReference type="PROSITE" id="PS50991">
    <property type="entry name" value="PYR_CT"/>
    <property type="match status" value="1"/>
</dbReference>
<comment type="function">
    <text evidence="1">Catalyzes the retro-aldol cleavage of 4-hydroxy-2-oxopentanoate to pyruvate and acetaldehyde. Is involved in the meta-cleavage pathway for the degradation of aromatic compounds.</text>
</comment>
<comment type="catalytic activity">
    <reaction evidence="1">
        <text>(S)-4-hydroxy-2-oxopentanoate = acetaldehyde + pyruvate</text>
        <dbReference type="Rhea" id="RHEA:22624"/>
        <dbReference type="ChEBI" id="CHEBI:15343"/>
        <dbReference type="ChEBI" id="CHEBI:15361"/>
        <dbReference type="ChEBI" id="CHEBI:73143"/>
        <dbReference type="EC" id="4.1.3.39"/>
    </reaction>
</comment>
<comment type="pathway">
    <text evidence="1">Aromatic compound metabolism; 3-phenylpropanoate degradation.</text>
</comment>
<comment type="subunit">
    <text evidence="1">Interacts with MhpF.</text>
</comment>
<comment type="similarity">
    <text evidence="1">Belongs to the 4-hydroxy-2-oxovalerate aldolase family.</text>
</comment>
<reference key="1">
    <citation type="journal article" date="2008" name="J. Bacteriol.">
        <title>The pangenome structure of Escherichia coli: comparative genomic analysis of E. coli commensal and pathogenic isolates.</title>
        <authorList>
            <person name="Rasko D.A."/>
            <person name="Rosovitz M.J."/>
            <person name="Myers G.S.A."/>
            <person name="Mongodin E.F."/>
            <person name="Fricke W.F."/>
            <person name="Gajer P."/>
            <person name="Crabtree J."/>
            <person name="Sebaihia M."/>
            <person name="Thomson N.R."/>
            <person name="Chaudhuri R."/>
            <person name="Henderson I.R."/>
            <person name="Sperandio V."/>
            <person name="Ravel J."/>
        </authorList>
    </citation>
    <scope>NUCLEOTIDE SEQUENCE [LARGE SCALE GENOMIC DNA]</scope>
    <source>
        <strain>E24377A / ETEC</strain>
    </source>
</reference>
<sequence length="337" mass="36470">MNGKKLYISDVTLRDGMHAIRHQYSLENVRQIAKALDDARVDSIEVAHGDGLQGSSFNYGFGAHSDLEWIEAAADVVKHAKIATLLLPGIGTIHDLKNAWQAGARVVRVATHCTEADVSAQHIQYARELGMDTVGFLMMSHMTTPENLAKQAKLMEGYGATCIYVVDSGGAMNMSDIRDRFRALKAELKPETQTGMHAHHNLSLGVANSIAAVEEGCDRIDASLAGMGAGAGNAPLEVFIAAADKLGWQHGTDLYALMDAADDLVRPLQDRPVRVDRETLALGYAGVYSSFLRHCETAAARYGLSAVDILVELGKRRMVGGQEDMIVDVALDLRNNK</sequence>
<name>HOA_ECO24</name>
<gene>
    <name evidence="1" type="primary">mhpE</name>
    <name type="ordered locus">EcE24377A_0376</name>
</gene>
<organism>
    <name type="scientific">Escherichia coli O139:H28 (strain E24377A / ETEC)</name>
    <dbReference type="NCBI Taxonomy" id="331111"/>
    <lineage>
        <taxon>Bacteria</taxon>
        <taxon>Pseudomonadati</taxon>
        <taxon>Pseudomonadota</taxon>
        <taxon>Gammaproteobacteria</taxon>
        <taxon>Enterobacterales</taxon>
        <taxon>Enterobacteriaceae</taxon>
        <taxon>Escherichia</taxon>
    </lineage>
</organism>
<feature type="chain" id="PRO_0000337804" description="4-hydroxy-2-oxovalerate aldolase">
    <location>
        <begin position="1"/>
        <end position="337"/>
    </location>
</feature>
<feature type="domain" description="Pyruvate carboxyltransferase" evidence="1">
    <location>
        <begin position="6"/>
        <end position="258"/>
    </location>
</feature>
<feature type="active site" description="Proton acceptor" evidence="1">
    <location>
        <position position="18"/>
    </location>
</feature>
<feature type="binding site" evidence="1">
    <location>
        <begin position="14"/>
        <end position="15"/>
    </location>
    <ligand>
        <name>substrate</name>
    </ligand>
</feature>
<feature type="binding site" evidence="1">
    <location>
        <position position="15"/>
    </location>
    <ligand>
        <name>Mn(2+)</name>
        <dbReference type="ChEBI" id="CHEBI:29035"/>
    </ligand>
</feature>
<feature type="binding site" evidence="1">
    <location>
        <position position="168"/>
    </location>
    <ligand>
        <name>substrate</name>
    </ligand>
</feature>
<feature type="binding site" evidence="1">
    <location>
        <position position="197"/>
    </location>
    <ligand>
        <name>Mn(2+)</name>
        <dbReference type="ChEBI" id="CHEBI:29035"/>
    </ligand>
</feature>
<feature type="binding site" evidence="1">
    <location>
        <position position="197"/>
    </location>
    <ligand>
        <name>substrate</name>
    </ligand>
</feature>
<feature type="binding site" evidence="1">
    <location>
        <position position="199"/>
    </location>
    <ligand>
        <name>Mn(2+)</name>
        <dbReference type="ChEBI" id="CHEBI:29035"/>
    </ligand>
</feature>
<feature type="binding site" evidence="1">
    <location>
        <position position="288"/>
    </location>
    <ligand>
        <name>substrate</name>
    </ligand>
</feature>
<feature type="site" description="Transition state stabilizer" evidence="1">
    <location>
        <position position="14"/>
    </location>
</feature>
<accession>A7ZI99</accession>
<keyword id="KW-0058">Aromatic hydrocarbons catabolism</keyword>
<keyword id="KW-0456">Lyase</keyword>
<keyword id="KW-0464">Manganese</keyword>
<keyword id="KW-0479">Metal-binding</keyword>
<keyword id="KW-1185">Reference proteome</keyword>
<evidence type="ECO:0000255" key="1">
    <source>
        <dbReference type="HAMAP-Rule" id="MF_01656"/>
    </source>
</evidence>